<gene>
    <name evidence="9" type="primary">fcbB1</name>
</gene>
<protein>
    <recommendedName>
        <fullName>4-chlorobenzoyl coenzyme A dehalogenase-1</fullName>
        <shortName>4-CBA-CoA dehalogenase-1</shortName>
        <shortName evidence="7">4-CBCoA dehalogenase-1</shortName>
        <shortName>4-chlorobenzoyl-CoA dehalogenase-1</shortName>
        <ecNumber>3.8.1.7</ecNumber>
    </recommendedName>
</protein>
<name>CBAD1_ARTSP</name>
<feature type="initiator methionine" description="Removed" evidence="4 6">
    <location>
        <position position="1"/>
    </location>
</feature>
<feature type="chain" id="PRO_0000401145" description="4-chlorobenzoyl coenzyme A dehalogenase-1" evidence="4 6">
    <location>
        <begin position="2"/>
        <end position="276"/>
    </location>
</feature>
<feature type="active site" description="Proton acceptor" evidence="2">
    <location>
        <position position="93"/>
    </location>
</feature>
<feature type="active site" description="Nucleophile" evidence="2">
    <location>
        <position position="148"/>
    </location>
</feature>
<feature type="binding site" description="in other chain" evidence="1">
    <location>
        <begin position="66"/>
        <end position="71"/>
    </location>
    <ligand>
        <name>substrate</name>
        <note>ligand shared between two oligomeric partners</note>
    </ligand>
</feature>
<feature type="binding site" description="in other chain" evidence="1">
    <location>
        <position position="117"/>
    </location>
    <ligand>
        <name>substrate</name>
        <note>ligand shared between two oligomeric partners</note>
    </ligand>
</feature>
<feature type="binding site" evidence="1">
    <location>
        <position position="261"/>
    </location>
    <ligand>
        <name>substrate</name>
        <note>ligand shared between two oligomeric partners</note>
    </ligand>
</feature>
<reference evidence="9" key="1">
    <citation type="journal article" date="2001" name="J. Bacteriol.">
        <title>Isolation and characterization of IS1409, an insertion element of 4-chlorobenzoate-degrading Arthrobacter sp. strain TM1, and development of a system for transposon mutagenesis.</title>
        <authorList>
            <person name="Gartemann K.H."/>
            <person name="Eichenlaub R."/>
        </authorList>
    </citation>
    <scope>NUCLEOTIDE SEQUENCE [GENOMIC DNA]</scope>
    <source>
        <strain evidence="9">NCIB 12013 / TM1</strain>
    </source>
</reference>
<reference evidence="8" key="2">
    <citation type="journal article" date="1994" name="Biochemistry">
        <title>Purification and characterization of 4-chlorobenzoyl CoA dehalogenase from Arthrobacter sp. strain 4-CB1.</title>
        <authorList>
            <person name="Crooks G.P."/>
            <person name="Copley S.D."/>
        </authorList>
    </citation>
    <scope>PROTEIN SEQUENCE OF 2-25</scope>
    <scope>FUNCTION</scope>
    <scope>CATALYTIC ACTIVITY</scope>
    <scope>BIOPHYSICOCHEMICAL PROPERTIES</scope>
    <scope>SUBUNIT</scope>
    <source>
        <strain evidence="6">4-CB1</strain>
    </source>
</reference>
<reference evidence="8" key="3">
    <citation type="journal article" date="2004" name="Biodegradation">
        <title>The purification and characterisation of 4-chlorobenzoate:CoA ligase and 4-chlorobenzoyl CoA dehalogenase from Arthrobacter sp. strain TM-1.</title>
        <authorList>
            <person name="Zhou L."/>
            <person name="Marks T.S."/>
            <person name="Poh R.P."/>
            <person name="Smith R.J."/>
            <person name="Chowdhry B.Z."/>
            <person name="Smith A.R."/>
        </authorList>
    </citation>
    <scope>PROTEIN SEQUENCE OF 2-21</scope>
    <scope>CATALYTIC ACTIVITY</scope>
    <scope>BIOPHYSICOCHEMICAL PROPERTIES</scope>
    <scope>SUBUNIT</scope>
    <source>
        <strain evidence="4">NCIB 12013 / TM1</strain>
    </source>
</reference>
<reference evidence="8" key="4">
    <citation type="journal article" date="2008" name="Biodegradation">
        <title>Structure and denaturation of 4-chlorobenzoyl coenzyme A dehalogenase from Arthrobacter sp. strain TM-1.</title>
        <authorList>
            <person name="Zhou L."/>
            <person name="Poh R.P."/>
            <person name="Marks T.S."/>
            <person name="Chowdhry B.Z."/>
            <person name="Smith A.R."/>
        </authorList>
    </citation>
    <scope>BIOPHYSICOCHEMICAL PROPERTIES</scope>
    <source>
        <strain evidence="5">NCIB 12013 / TM1</strain>
    </source>
</reference>
<comment type="function">
    <text evidence="6">Dehalogenates 4-chlorobenzoyl-CoA, 4-iodobenzoyl-CoA, 4-bromobenzoyl-CoA and, at a slower rate, 4-fluorobenzoyl-CoA. Does not dehalogenate 2-chlorobenzoyl-CoA or 3-chlorobenzoyl-CoA.</text>
</comment>
<comment type="catalytic activity">
    <reaction evidence="4 6">
        <text>4-chlorobenzoyl-CoA + H2O = 4-hydroxybenzoyl-CoA + chloride + H(+)</text>
        <dbReference type="Rhea" id="RHEA:14853"/>
        <dbReference type="ChEBI" id="CHEBI:15377"/>
        <dbReference type="ChEBI" id="CHEBI:15378"/>
        <dbReference type="ChEBI" id="CHEBI:17996"/>
        <dbReference type="ChEBI" id="CHEBI:57354"/>
        <dbReference type="ChEBI" id="CHEBI:57356"/>
        <dbReference type="EC" id="3.8.1.7"/>
    </reaction>
</comment>
<comment type="biophysicochemical properties">
    <kinetics>
        <KM evidence="4 5 6">14 uM for 4-iodobenzoyl-CoA (at 30 degrees Celsius, in 20 mM phosphate buffer, pH 7.2)</KM>
        <KM evidence="4 5 6">36 uM for 4-bromobenzoyl-CoA (at 30 degrees Celsius, in 20 mM phosphate buffer, pH 7.2)</KM>
        <KM evidence="4 5 6">34 uM for 4-chlorobenzoyl-CoA (at 30 degrees Celsius, in 20 mM phosphate buffer, pH 7.2)</KM>
        <KM evidence="4 5 6">75 uM for 4-fluorobenzoyl-CoA (at 30 degrees Celsius, in 20 mM phosphate buffer, pH 7.2)</KM>
        <KM evidence="4 5 6">9 uM for 4-chlorobenzoyl-CoA (at 30 degrees Celsius, in 50 mM phosphate buffer, pH 7.5)</KM>
    </kinetics>
    <phDependence>
        <text evidence="4 5 6">Optimum pH is 8.0 in MOPS buffer at 30 degrees Celsius, 7.5 in 0.1 M potassium phosphate buffer at 30 degrees Celsius, and 7.4 in 20 mM potassium phosphate/2 mM DTT buffer at 30 degrees Celsius. Retains full activity in MOPS buffer between pH 6.5 and 10.0. Is irreversibly damaged below pH 6.5 in MOPS buffer, enzyme treated at pH 6.0 in MOPS buffer only regains 40% of its original activity after re-equilibration at pH 7.2. When treated at pH 5.2 or 10.1 in 20 mM potassium phosphate/2 mM DTT buffer activity is lost completely, but is recovered within 17 minutes following readjustment to pH 7.4.</text>
    </phDependence>
    <temperatureDependence>
        <text evidence="4 5 6">Optimum temperature is 45 degrees Celsius. Activity is lost after 5 minutes incubation at 60 degrees Celsius, but one-fifth of this activity is restored after cooling to 45 degrees Celsius.</text>
    </temperatureDependence>
</comment>
<comment type="pathway">
    <text evidence="2">Xenobiotic degradation; 4-chlorobenzoate degradation; 4-hydroxybenzoate from 4-chlorobenzoate: step 2/3.</text>
</comment>
<comment type="subunit">
    <text evidence="4 6">Homotetramer.</text>
</comment>
<comment type="similarity">
    <text evidence="3">Belongs to the enoyl-CoA hydratase/isomerase family.</text>
</comment>
<evidence type="ECO:0000250" key="1"/>
<evidence type="ECO:0000250" key="2">
    <source>
        <dbReference type="UniProtKB" id="A5JTM5"/>
    </source>
</evidence>
<evidence type="ECO:0000255" key="3"/>
<evidence type="ECO:0000269" key="4">
    <source>
    </source>
</evidence>
<evidence type="ECO:0000269" key="5">
    <source>
    </source>
</evidence>
<evidence type="ECO:0000269" key="6">
    <source>
    </source>
</evidence>
<evidence type="ECO:0000303" key="7">
    <source>
    </source>
</evidence>
<evidence type="ECO:0000305" key="8"/>
<evidence type="ECO:0000312" key="9">
    <source>
        <dbReference type="EMBL" id="AAF76241.1"/>
    </source>
</evidence>
<proteinExistence type="evidence at protein level"/>
<sequence length="276" mass="29899">MSSNSDHHISVEHTDGVATIRFTRPSKHNAASGQLLLETLEALYRLESDDSVGAIVLTGEGAVFSAGFDLEEVPMGPASEIQSHFRLKALYYHAVIHMLARIEKPTLAAINGPAVGGGLGMSLACDLAVCTDRATFLPAWMSIGIANDASSSFYLPRIVGYRRAMEWLLTNRTLGADEAYEWGVVNRVFSEADFQSRVGEIARQLAAAPTHLQGLVKNRIQEGSSETLESCTEHEVQNVIASVGHPHFAERLAMFRSKEMRSSALAVDLDAVCGGR</sequence>
<keyword id="KW-0903">Direct protein sequencing</keyword>
<keyword id="KW-0378">Hydrolase</keyword>
<accession>O85078</accession>
<accession>Q04415</accession>
<organism>
    <name type="scientific">Arthrobacter sp</name>
    <dbReference type="NCBI Taxonomy" id="1667"/>
    <lineage>
        <taxon>Bacteria</taxon>
        <taxon>Bacillati</taxon>
        <taxon>Actinomycetota</taxon>
        <taxon>Actinomycetes</taxon>
        <taxon>Micrococcales</taxon>
        <taxon>Micrococcaceae</taxon>
        <taxon>Arthrobacter</taxon>
    </lineage>
</organism>
<dbReference type="EC" id="3.8.1.7"/>
<dbReference type="EMBL" id="AF042490">
    <property type="protein sequence ID" value="AAF76241.1"/>
    <property type="molecule type" value="Genomic_DNA"/>
</dbReference>
<dbReference type="SMR" id="O85078"/>
<dbReference type="UniPathway" id="UPA01011">
    <property type="reaction ID" value="UER01021"/>
</dbReference>
<dbReference type="GO" id="GO:0018787">
    <property type="term" value="F:4-chlorobenzoyl-CoA dehalogenase activity"/>
    <property type="evidence" value="ECO:0007669"/>
    <property type="project" value="UniProtKB-EC"/>
</dbReference>
<dbReference type="CDD" id="cd06558">
    <property type="entry name" value="crotonase-like"/>
    <property type="match status" value="1"/>
</dbReference>
<dbReference type="FunFam" id="1.10.12.10:FF:000028">
    <property type="entry name" value="4-chlorobenzoyl coenzyme A dehalogenase"/>
    <property type="match status" value="1"/>
</dbReference>
<dbReference type="Gene3D" id="3.90.226.10">
    <property type="entry name" value="2-enoyl-CoA Hydratase, Chain A, domain 1"/>
    <property type="match status" value="1"/>
</dbReference>
<dbReference type="Gene3D" id="1.10.12.10">
    <property type="entry name" value="Lyase 2-enoyl-coa Hydratase, Chain A, domain 2"/>
    <property type="match status" value="1"/>
</dbReference>
<dbReference type="InterPro" id="IPR029045">
    <property type="entry name" value="ClpP/crotonase-like_dom_sf"/>
</dbReference>
<dbReference type="InterPro" id="IPR051053">
    <property type="entry name" value="ECH/Chromodomain_protein"/>
</dbReference>
<dbReference type="InterPro" id="IPR018376">
    <property type="entry name" value="Enoyl-CoA_hyd/isom_CS"/>
</dbReference>
<dbReference type="InterPro" id="IPR001753">
    <property type="entry name" value="Enoyl-CoA_hydra/iso"/>
</dbReference>
<dbReference type="InterPro" id="IPR014748">
    <property type="entry name" value="Enoyl-CoA_hydra_C"/>
</dbReference>
<dbReference type="PANTHER" id="PTHR43684">
    <property type="match status" value="1"/>
</dbReference>
<dbReference type="PANTHER" id="PTHR43684:SF4">
    <property type="entry name" value="ENOYL-COA HYDRATASE_ISOMERASE FAMILY PROTEIN (AFU_ORTHOLOGUE AFUA_1G01890)"/>
    <property type="match status" value="1"/>
</dbReference>
<dbReference type="Pfam" id="PF00378">
    <property type="entry name" value="ECH_1"/>
    <property type="match status" value="1"/>
</dbReference>
<dbReference type="SUPFAM" id="SSF52096">
    <property type="entry name" value="ClpP/crotonase"/>
    <property type="match status" value="1"/>
</dbReference>
<dbReference type="PROSITE" id="PS00166">
    <property type="entry name" value="ENOYL_COA_HYDRATASE"/>
    <property type="match status" value="1"/>
</dbReference>